<sequence length="109" mass="12015">MFGKGGLGNLMKQAQQMQEKMQKMQEEIAQLEVTGESGAGLVKVTINGAHNCRRVEIDPSLLEDDKEMLEDLVAAAFNDAARRIEETQKEKMASVSSGMQLPPGFKMPF</sequence>
<evidence type="ECO:0000255" key="1">
    <source>
        <dbReference type="HAMAP-Rule" id="MF_00274"/>
    </source>
</evidence>
<protein>
    <recommendedName>
        <fullName evidence="1">Nucleoid-associated protein YbaB</fullName>
    </recommendedName>
</protein>
<name>YBAB_ECO27</name>
<proteinExistence type="inferred from homology"/>
<keyword id="KW-0963">Cytoplasm</keyword>
<keyword id="KW-0238">DNA-binding</keyword>
<keyword id="KW-1185">Reference proteome</keyword>
<feature type="chain" id="PRO_1000197655" description="Nucleoid-associated protein YbaB">
    <location>
        <begin position="1"/>
        <end position="109"/>
    </location>
</feature>
<accession>B7UKF1</accession>
<dbReference type="EMBL" id="FM180568">
    <property type="protein sequence ID" value="CAS07954.1"/>
    <property type="molecule type" value="Genomic_DNA"/>
</dbReference>
<dbReference type="RefSeq" id="WP_000467098.1">
    <property type="nucleotide sequence ID" value="NC_011601.1"/>
</dbReference>
<dbReference type="SMR" id="B7UKF1"/>
<dbReference type="KEGG" id="ecg:E2348C_0406"/>
<dbReference type="HOGENOM" id="CLU_140930_0_0_6"/>
<dbReference type="Proteomes" id="UP000008205">
    <property type="component" value="Chromosome"/>
</dbReference>
<dbReference type="GO" id="GO:0043590">
    <property type="term" value="C:bacterial nucleoid"/>
    <property type="evidence" value="ECO:0007669"/>
    <property type="project" value="UniProtKB-UniRule"/>
</dbReference>
<dbReference type="GO" id="GO:0005829">
    <property type="term" value="C:cytosol"/>
    <property type="evidence" value="ECO:0007669"/>
    <property type="project" value="TreeGrafter"/>
</dbReference>
<dbReference type="GO" id="GO:0003677">
    <property type="term" value="F:DNA binding"/>
    <property type="evidence" value="ECO:0007669"/>
    <property type="project" value="UniProtKB-UniRule"/>
</dbReference>
<dbReference type="FunFam" id="3.30.1310.10:FF:000001">
    <property type="entry name" value="Nucleoid-associated protein YbaB"/>
    <property type="match status" value="1"/>
</dbReference>
<dbReference type="Gene3D" id="3.30.1310.10">
    <property type="entry name" value="Nucleoid-associated protein YbaB-like domain"/>
    <property type="match status" value="1"/>
</dbReference>
<dbReference type="HAMAP" id="MF_00274">
    <property type="entry name" value="DNA_YbaB_EbfC"/>
    <property type="match status" value="1"/>
</dbReference>
<dbReference type="InterPro" id="IPR036894">
    <property type="entry name" value="YbaB-like_sf"/>
</dbReference>
<dbReference type="InterPro" id="IPR004401">
    <property type="entry name" value="YbaB/EbfC"/>
</dbReference>
<dbReference type="NCBIfam" id="TIGR00103">
    <property type="entry name" value="DNA_YbaB_EbfC"/>
    <property type="match status" value="1"/>
</dbReference>
<dbReference type="PANTHER" id="PTHR33449">
    <property type="entry name" value="NUCLEOID-ASSOCIATED PROTEIN YBAB"/>
    <property type="match status" value="1"/>
</dbReference>
<dbReference type="PANTHER" id="PTHR33449:SF1">
    <property type="entry name" value="NUCLEOID-ASSOCIATED PROTEIN YBAB"/>
    <property type="match status" value="1"/>
</dbReference>
<dbReference type="Pfam" id="PF02575">
    <property type="entry name" value="YbaB_DNA_bd"/>
    <property type="match status" value="1"/>
</dbReference>
<dbReference type="PIRSF" id="PIRSF004555">
    <property type="entry name" value="UCP004555"/>
    <property type="match status" value="1"/>
</dbReference>
<dbReference type="SUPFAM" id="SSF82607">
    <property type="entry name" value="YbaB-like"/>
    <property type="match status" value="1"/>
</dbReference>
<gene>
    <name evidence="1" type="primary">ybaB</name>
    <name type="ordered locus">E2348C_0406</name>
</gene>
<organism>
    <name type="scientific">Escherichia coli O127:H6 (strain E2348/69 / EPEC)</name>
    <dbReference type="NCBI Taxonomy" id="574521"/>
    <lineage>
        <taxon>Bacteria</taxon>
        <taxon>Pseudomonadati</taxon>
        <taxon>Pseudomonadota</taxon>
        <taxon>Gammaproteobacteria</taxon>
        <taxon>Enterobacterales</taxon>
        <taxon>Enterobacteriaceae</taxon>
        <taxon>Escherichia</taxon>
    </lineage>
</organism>
<reference key="1">
    <citation type="journal article" date="2009" name="J. Bacteriol.">
        <title>Complete genome sequence and comparative genome analysis of enteropathogenic Escherichia coli O127:H6 strain E2348/69.</title>
        <authorList>
            <person name="Iguchi A."/>
            <person name="Thomson N.R."/>
            <person name="Ogura Y."/>
            <person name="Saunders D."/>
            <person name="Ooka T."/>
            <person name="Henderson I.R."/>
            <person name="Harris D."/>
            <person name="Asadulghani M."/>
            <person name="Kurokawa K."/>
            <person name="Dean P."/>
            <person name="Kenny B."/>
            <person name="Quail M.A."/>
            <person name="Thurston S."/>
            <person name="Dougan G."/>
            <person name="Hayashi T."/>
            <person name="Parkhill J."/>
            <person name="Frankel G."/>
        </authorList>
    </citation>
    <scope>NUCLEOTIDE SEQUENCE [LARGE SCALE GENOMIC DNA]</scope>
    <source>
        <strain>E2348/69 / EPEC</strain>
    </source>
</reference>
<comment type="function">
    <text evidence="1">Binds to DNA and alters its conformation. May be involved in regulation of gene expression, nucleoid organization and DNA protection.</text>
</comment>
<comment type="subunit">
    <text evidence="1">Homodimer.</text>
</comment>
<comment type="subcellular location">
    <subcellularLocation>
        <location evidence="1">Cytoplasm</location>
        <location evidence="1">Nucleoid</location>
    </subcellularLocation>
</comment>
<comment type="similarity">
    <text evidence="1">Belongs to the YbaB/EbfC family.</text>
</comment>